<reference key="1">
    <citation type="journal article" date="2009" name="PLoS Genet.">
        <title>Organised genome dynamics in the Escherichia coli species results in highly diverse adaptive paths.</title>
        <authorList>
            <person name="Touchon M."/>
            <person name="Hoede C."/>
            <person name="Tenaillon O."/>
            <person name="Barbe V."/>
            <person name="Baeriswyl S."/>
            <person name="Bidet P."/>
            <person name="Bingen E."/>
            <person name="Bonacorsi S."/>
            <person name="Bouchier C."/>
            <person name="Bouvet O."/>
            <person name="Calteau A."/>
            <person name="Chiapello H."/>
            <person name="Clermont O."/>
            <person name="Cruveiller S."/>
            <person name="Danchin A."/>
            <person name="Diard M."/>
            <person name="Dossat C."/>
            <person name="Karoui M.E."/>
            <person name="Frapy E."/>
            <person name="Garry L."/>
            <person name="Ghigo J.M."/>
            <person name="Gilles A.M."/>
            <person name="Johnson J."/>
            <person name="Le Bouguenec C."/>
            <person name="Lescat M."/>
            <person name="Mangenot S."/>
            <person name="Martinez-Jehanne V."/>
            <person name="Matic I."/>
            <person name="Nassif X."/>
            <person name="Oztas S."/>
            <person name="Petit M.A."/>
            <person name="Pichon C."/>
            <person name="Rouy Z."/>
            <person name="Ruf C.S."/>
            <person name="Schneider D."/>
            <person name="Tourret J."/>
            <person name="Vacherie B."/>
            <person name="Vallenet D."/>
            <person name="Medigue C."/>
            <person name="Rocha E.P.C."/>
            <person name="Denamur E."/>
        </authorList>
    </citation>
    <scope>NUCLEOTIDE SEQUENCE [LARGE SCALE GENOMIC DNA]</scope>
    <source>
        <strain>55989 / EAEC</strain>
    </source>
</reference>
<keyword id="KW-0002">3D-structure</keyword>
<keyword id="KW-0021">Allosteric enzyme</keyword>
<keyword id="KW-0963">Cytoplasm</keyword>
<keyword id="KW-0378">Hydrolase</keyword>
<keyword id="KW-0479">Metal-binding</keyword>
<keyword id="KW-0645">Protease</keyword>
<keyword id="KW-1185">Reference proteome</keyword>
<keyword id="KW-0915">Sodium</keyword>
<keyword id="KW-0346">Stress response</keyword>
<keyword id="KW-0888">Threonine protease</keyword>
<evidence type="ECO:0000255" key="1">
    <source>
        <dbReference type="HAMAP-Rule" id="MF_00248"/>
    </source>
</evidence>
<evidence type="ECO:0007829" key="2">
    <source>
        <dbReference type="PDB" id="5JI2"/>
    </source>
</evidence>
<organism>
    <name type="scientific">Escherichia coli (strain 55989 / EAEC)</name>
    <dbReference type="NCBI Taxonomy" id="585055"/>
    <lineage>
        <taxon>Bacteria</taxon>
        <taxon>Pseudomonadati</taxon>
        <taxon>Pseudomonadota</taxon>
        <taxon>Gammaproteobacteria</taxon>
        <taxon>Enterobacterales</taxon>
        <taxon>Enterobacteriaceae</taxon>
        <taxon>Escherichia</taxon>
    </lineage>
</organism>
<dbReference type="EC" id="3.4.25.2" evidence="1"/>
<dbReference type="EMBL" id="CU928145">
    <property type="protein sequence ID" value="CAV01137.1"/>
    <property type="molecule type" value="Genomic_DNA"/>
</dbReference>
<dbReference type="RefSeq" id="WP_000208242.1">
    <property type="nucleotide sequence ID" value="NZ_CP028304.1"/>
</dbReference>
<dbReference type="PDB" id="5JI2">
    <property type="method" value="X-ray"/>
    <property type="resolution" value="3.31 A"/>
    <property type="chains" value="A/B/C/D=1-176"/>
</dbReference>
<dbReference type="PDBsum" id="5JI2"/>
<dbReference type="SMR" id="B7LA29"/>
<dbReference type="MEROPS" id="T01.006"/>
<dbReference type="GeneID" id="93777966"/>
<dbReference type="KEGG" id="eck:EC55989_4410"/>
<dbReference type="HOGENOM" id="CLU_093872_1_0_6"/>
<dbReference type="Proteomes" id="UP000000746">
    <property type="component" value="Chromosome"/>
</dbReference>
<dbReference type="GO" id="GO:0009376">
    <property type="term" value="C:HslUV protease complex"/>
    <property type="evidence" value="ECO:0007669"/>
    <property type="project" value="UniProtKB-UniRule"/>
</dbReference>
<dbReference type="GO" id="GO:0005839">
    <property type="term" value="C:proteasome core complex"/>
    <property type="evidence" value="ECO:0007669"/>
    <property type="project" value="InterPro"/>
</dbReference>
<dbReference type="GO" id="GO:0046872">
    <property type="term" value="F:metal ion binding"/>
    <property type="evidence" value="ECO:0007669"/>
    <property type="project" value="UniProtKB-KW"/>
</dbReference>
<dbReference type="GO" id="GO:0004298">
    <property type="term" value="F:threonine-type endopeptidase activity"/>
    <property type="evidence" value="ECO:0007669"/>
    <property type="project" value="UniProtKB-KW"/>
</dbReference>
<dbReference type="GO" id="GO:0051603">
    <property type="term" value="P:proteolysis involved in protein catabolic process"/>
    <property type="evidence" value="ECO:0007669"/>
    <property type="project" value="InterPro"/>
</dbReference>
<dbReference type="CDD" id="cd01913">
    <property type="entry name" value="protease_HslV"/>
    <property type="match status" value="1"/>
</dbReference>
<dbReference type="FunFam" id="3.60.20.10:FF:000002">
    <property type="entry name" value="ATP-dependent protease subunit HslV"/>
    <property type="match status" value="1"/>
</dbReference>
<dbReference type="Gene3D" id="3.60.20.10">
    <property type="entry name" value="Glutamine Phosphoribosylpyrophosphate, subunit 1, domain 1"/>
    <property type="match status" value="1"/>
</dbReference>
<dbReference type="HAMAP" id="MF_00248">
    <property type="entry name" value="HslV"/>
    <property type="match status" value="1"/>
</dbReference>
<dbReference type="InterPro" id="IPR022281">
    <property type="entry name" value="ATP-dep_Prtase_HsIV_su"/>
</dbReference>
<dbReference type="InterPro" id="IPR029055">
    <property type="entry name" value="Ntn_hydrolases_N"/>
</dbReference>
<dbReference type="InterPro" id="IPR001353">
    <property type="entry name" value="Proteasome_sua/b"/>
</dbReference>
<dbReference type="InterPro" id="IPR023333">
    <property type="entry name" value="Proteasome_suB-type"/>
</dbReference>
<dbReference type="NCBIfam" id="TIGR03692">
    <property type="entry name" value="ATP_dep_HslV"/>
    <property type="match status" value="1"/>
</dbReference>
<dbReference type="NCBIfam" id="NF003964">
    <property type="entry name" value="PRK05456.1"/>
    <property type="match status" value="1"/>
</dbReference>
<dbReference type="PANTHER" id="PTHR32194:SF0">
    <property type="entry name" value="ATP-DEPENDENT PROTEASE SUBUNIT HSLV"/>
    <property type="match status" value="1"/>
</dbReference>
<dbReference type="PANTHER" id="PTHR32194">
    <property type="entry name" value="METALLOPROTEASE TLDD"/>
    <property type="match status" value="1"/>
</dbReference>
<dbReference type="Pfam" id="PF00227">
    <property type="entry name" value="Proteasome"/>
    <property type="match status" value="1"/>
</dbReference>
<dbReference type="PIRSF" id="PIRSF039093">
    <property type="entry name" value="HslV"/>
    <property type="match status" value="1"/>
</dbReference>
<dbReference type="SUPFAM" id="SSF56235">
    <property type="entry name" value="N-terminal nucleophile aminohydrolases (Ntn hydrolases)"/>
    <property type="match status" value="1"/>
</dbReference>
<dbReference type="PROSITE" id="PS51476">
    <property type="entry name" value="PROTEASOME_BETA_2"/>
    <property type="match status" value="1"/>
</dbReference>
<accession>B7LA29</accession>
<sequence length="176" mass="19093">MTTIVSVRRNGHVVIAGDGQATLGNTVMKGNVKKVRRLYNDKVIAGFAGGTADAFTLFELFERKLEMHQGHLVKAAVELAKDWRTDRMLRKLEALLAVADETASLIITGNGDVVQPENDLIAIGSGGPYAQAAARALLENTELSAREIAEKALDIAGDICIYTNHFHTIEELSYKA</sequence>
<protein>
    <recommendedName>
        <fullName evidence="1">ATP-dependent protease subunit HslV</fullName>
        <ecNumber evidence="1">3.4.25.2</ecNumber>
    </recommendedName>
    <alternativeName>
        <fullName evidence="1">Heat shock protein HslV</fullName>
    </alternativeName>
</protein>
<feature type="chain" id="PRO_1000125407" description="ATP-dependent protease subunit HslV">
    <location>
        <begin position="1"/>
        <end position="176"/>
    </location>
</feature>
<feature type="active site" evidence="1">
    <location>
        <position position="2"/>
    </location>
</feature>
<feature type="binding site" evidence="1">
    <location>
        <position position="157"/>
    </location>
    <ligand>
        <name>Na(+)</name>
        <dbReference type="ChEBI" id="CHEBI:29101"/>
    </ligand>
</feature>
<feature type="binding site" evidence="1">
    <location>
        <position position="160"/>
    </location>
    <ligand>
        <name>Na(+)</name>
        <dbReference type="ChEBI" id="CHEBI:29101"/>
    </ligand>
</feature>
<feature type="binding site" evidence="1">
    <location>
        <position position="163"/>
    </location>
    <ligand>
        <name>Na(+)</name>
        <dbReference type="ChEBI" id="CHEBI:29101"/>
    </ligand>
</feature>
<feature type="strand" evidence="2">
    <location>
        <begin position="4"/>
        <end position="9"/>
    </location>
</feature>
<feature type="strand" evidence="2">
    <location>
        <begin position="12"/>
        <end position="18"/>
    </location>
</feature>
<feature type="strand" evidence="2">
    <location>
        <begin position="21"/>
        <end position="23"/>
    </location>
</feature>
<feature type="strand" evidence="2">
    <location>
        <begin position="26"/>
        <end position="30"/>
    </location>
</feature>
<feature type="strand" evidence="2">
    <location>
        <begin position="35"/>
        <end position="38"/>
    </location>
</feature>
<feature type="turn" evidence="2">
    <location>
        <begin position="39"/>
        <end position="42"/>
    </location>
</feature>
<feature type="strand" evidence="2">
    <location>
        <begin position="43"/>
        <end position="49"/>
    </location>
</feature>
<feature type="helix" evidence="2">
    <location>
        <begin position="51"/>
        <end position="67"/>
    </location>
</feature>
<feature type="turn" evidence="2">
    <location>
        <begin position="68"/>
        <end position="70"/>
    </location>
</feature>
<feature type="helix" evidence="2">
    <location>
        <begin position="72"/>
        <end position="85"/>
    </location>
</feature>
<feature type="helix" evidence="2">
    <location>
        <begin position="87"/>
        <end position="91"/>
    </location>
</feature>
<feature type="strand" evidence="2">
    <location>
        <begin position="94"/>
        <end position="99"/>
    </location>
</feature>
<feature type="strand" evidence="2">
    <location>
        <begin position="104"/>
        <end position="107"/>
    </location>
</feature>
<feature type="helix" evidence="2">
    <location>
        <begin position="117"/>
        <end position="119"/>
    </location>
</feature>
<feature type="strand" evidence="2">
    <location>
        <begin position="121"/>
        <end position="124"/>
    </location>
</feature>
<feature type="helix" evidence="2">
    <location>
        <begin position="127"/>
        <end position="140"/>
    </location>
</feature>
<feature type="helix" evidence="2">
    <location>
        <begin position="145"/>
        <end position="159"/>
    </location>
</feature>
<feature type="strand" evidence="2">
    <location>
        <begin position="167"/>
        <end position="173"/>
    </location>
</feature>
<comment type="function">
    <text evidence="1">Protease subunit of a proteasome-like degradation complex believed to be a general protein degrading machinery.</text>
</comment>
<comment type="catalytic activity">
    <reaction evidence="1">
        <text>ATP-dependent cleavage of peptide bonds with broad specificity.</text>
        <dbReference type="EC" id="3.4.25.2"/>
    </reaction>
</comment>
<comment type="activity regulation">
    <text evidence="1">Allosterically activated by HslU binding.</text>
</comment>
<comment type="subunit">
    <text evidence="1">A double ring-shaped homohexamer of HslV is capped on each side by a ring-shaped HslU homohexamer. The assembly of the HslU/HslV complex is dependent on binding of ATP.</text>
</comment>
<comment type="subcellular location">
    <subcellularLocation>
        <location evidence="1">Cytoplasm</location>
    </subcellularLocation>
</comment>
<comment type="induction">
    <text evidence="1">By heat shock.</text>
</comment>
<comment type="similarity">
    <text evidence="1">Belongs to the peptidase T1B family. HslV subfamily.</text>
</comment>
<name>HSLV_ECO55</name>
<proteinExistence type="evidence at protein level"/>
<gene>
    <name evidence="1" type="primary">hslV</name>
    <name type="ordered locus">EC55989_4410</name>
</gene>